<sequence length="276" mass="30608">MTSFRLALIQLQISSIKSDNVTRACSFIREAATQGAKIVSLPECFNSPYGAKYFPEYAEKIPGESTQKLSEVAKECSIYLIGGSIPEEDAGKLYNTCAVFGPDGTLLAKYRKIHLFDIDVPGKITFQESKTLSPGDSFSTFDTPYCRVGLGICYDMRFAELAQIYAQRGCQLLVYPGAFNLTTGPAHWELLQRSRAVDNQVYVATASPARDDKASYVAWGHSTVVNPWGEVLAKAGTEEAIVYSDIDLKKLAEIRQQIPVFRQKRSDLYAVEMKKP</sequence>
<protein>
    <recommendedName>
        <fullName>Omega-amidase NIT2</fullName>
        <ecNumber evidence="6 7">3.5.1.3</ecNumber>
    </recommendedName>
    <alternativeName>
        <fullName>Nitrilase homolog 2</fullName>
    </alternativeName>
</protein>
<feature type="chain" id="PRO_0000320252" description="Omega-amidase NIT2">
    <location>
        <begin position="1"/>
        <end position="276"/>
    </location>
</feature>
<feature type="domain" description="CN hydrolase" evidence="2">
    <location>
        <begin position="4"/>
        <end position="248"/>
    </location>
</feature>
<feature type="active site" description="Proton acceptor" evidence="2 11">
    <location>
        <position position="43"/>
    </location>
</feature>
<feature type="active site" description="Proton donor" evidence="2 11">
    <location>
        <position position="112"/>
    </location>
</feature>
<feature type="active site" description="Nucleophile" evidence="2 11">
    <location>
        <position position="153"/>
    </location>
</feature>
<feature type="modified residue" description="Phosphoserine" evidence="12">
    <location>
        <position position="26"/>
    </location>
</feature>
<feature type="modified residue" description="N6-acetyllysine; alternate" evidence="1">
    <location>
        <position position="68"/>
    </location>
</feature>
<feature type="modified residue" description="N6-succinyllysine; alternate" evidence="1">
    <location>
        <position position="68"/>
    </location>
</feature>
<feature type="modified residue" description="N6-succinyllysine" evidence="1">
    <location>
        <position position="123"/>
    </location>
</feature>
<feature type="modified residue" description="N6-succinyllysine" evidence="1">
    <location>
        <position position="130"/>
    </location>
</feature>
<feature type="sequence variant" id="VAR_039180" description="In dbSNP:rs17851799." evidence="4">
    <original>V</original>
    <variation>A</variation>
    <location>
        <position position="231"/>
    </location>
</feature>
<feature type="mutagenesis site" description="Loss of activity using succinamate as substrate." evidence="7">
    <original>E</original>
    <variation>A</variation>
    <location>
        <position position="43"/>
    </location>
</feature>
<feature type="mutagenesis site" description="Loss of activity using succinamate as substrate." evidence="7">
    <original>K</original>
    <variation>A</variation>
    <location>
        <position position="112"/>
    </location>
</feature>
<feature type="mutagenesis site" description="Less than 3% of wild-type activity using succinamate as substrate." evidence="7">
    <location>
        <begin position="116"/>
        <end position="128"/>
    </location>
</feature>
<feature type="mutagenesis site" description="Loss of activity using succinamate as substrate." evidence="7">
    <original>C</original>
    <variation>A</variation>
    <location>
        <position position="153"/>
    </location>
</feature>
<dbReference type="EC" id="3.5.1.3" evidence="6 7"/>
<dbReference type="EMBL" id="AF284574">
    <property type="protein sequence ID" value="AAF87103.1"/>
    <property type="molecule type" value="mRNA"/>
</dbReference>
<dbReference type="EMBL" id="AF260334">
    <property type="protein sequence ID" value="AAG44665.1"/>
    <property type="molecule type" value="mRNA"/>
</dbReference>
<dbReference type="EMBL" id="AK313704">
    <property type="protein sequence ID" value="BAG36450.1"/>
    <property type="molecule type" value="mRNA"/>
</dbReference>
<dbReference type="EMBL" id="CH471052">
    <property type="protein sequence ID" value="EAW79824.1"/>
    <property type="molecule type" value="Genomic_DNA"/>
</dbReference>
<dbReference type="EMBL" id="CH471052">
    <property type="protein sequence ID" value="EAW79825.1"/>
    <property type="molecule type" value="Genomic_DNA"/>
</dbReference>
<dbReference type="EMBL" id="BC020620">
    <property type="protein sequence ID" value="AAH20620.1"/>
    <property type="molecule type" value="mRNA"/>
</dbReference>
<dbReference type="EMBL" id="BC107890">
    <property type="protein sequence ID" value="AAI07891.1"/>
    <property type="molecule type" value="mRNA"/>
</dbReference>
<dbReference type="CCDS" id="CCDS33806.1"/>
<dbReference type="RefSeq" id="NP_064587.1">
    <property type="nucleotide sequence ID" value="NM_020202.5"/>
</dbReference>
<dbReference type="SMR" id="Q9NQR4"/>
<dbReference type="BioGRID" id="121278">
    <property type="interactions" value="76"/>
</dbReference>
<dbReference type="FunCoup" id="Q9NQR4">
    <property type="interactions" value="981"/>
</dbReference>
<dbReference type="IntAct" id="Q9NQR4">
    <property type="interactions" value="10"/>
</dbReference>
<dbReference type="MINT" id="Q9NQR4"/>
<dbReference type="STRING" id="9606.ENSP00000377696"/>
<dbReference type="GlyGen" id="Q9NQR4">
    <property type="glycosylation" value="1 site, 1 O-linked glycan (1 site)"/>
</dbReference>
<dbReference type="iPTMnet" id="Q9NQR4"/>
<dbReference type="PhosphoSitePlus" id="Q9NQR4"/>
<dbReference type="SwissPalm" id="Q9NQR4"/>
<dbReference type="BioMuta" id="NIT2"/>
<dbReference type="DMDM" id="74725271"/>
<dbReference type="REPRODUCTION-2DPAGE" id="IPI00549467"/>
<dbReference type="CPTAC" id="CPTAC-549"/>
<dbReference type="CPTAC" id="CPTAC-550"/>
<dbReference type="jPOST" id="Q9NQR4"/>
<dbReference type="MassIVE" id="Q9NQR4"/>
<dbReference type="PaxDb" id="9606-ENSP00000377696"/>
<dbReference type="PeptideAtlas" id="Q9NQR4"/>
<dbReference type="ProteomicsDB" id="82173"/>
<dbReference type="Pumba" id="Q9NQR4"/>
<dbReference type="Antibodypedia" id="32221">
    <property type="antibodies" value="256 antibodies from 25 providers"/>
</dbReference>
<dbReference type="DNASU" id="56954"/>
<dbReference type="Ensembl" id="ENST00000394140.9">
    <property type="protein sequence ID" value="ENSP00000377696.3"/>
    <property type="gene ID" value="ENSG00000114021.12"/>
</dbReference>
<dbReference type="GeneID" id="56954"/>
<dbReference type="KEGG" id="hsa:56954"/>
<dbReference type="MANE-Select" id="ENST00000394140.9">
    <property type="protein sequence ID" value="ENSP00000377696.3"/>
    <property type="RefSeq nucleotide sequence ID" value="NM_020202.5"/>
    <property type="RefSeq protein sequence ID" value="NP_064587.1"/>
</dbReference>
<dbReference type="AGR" id="HGNC:29878"/>
<dbReference type="CTD" id="56954"/>
<dbReference type="DisGeNET" id="56954"/>
<dbReference type="GeneCards" id="NIT2"/>
<dbReference type="HGNC" id="HGNC:29878">
    <property type="gene designation" value="NIT2"/>
</dbReference>
<dbReference type="HPA" id="ENSG00000114021">
    <property type="expression patterns" value="Tissue enhanced (liver)"/>
</dbReference>
<dbReference type="neXtProt" id="NX_Q9NQR4"/>
<dbReference type="OpenTargets" id="ENSG00000114021"/>
<dbReference type="PharmGKB" id="PA134882857"/>
<dbReference type="VEuPathDB" id="HostDB:ENSG00000114021"/>
<dbReference type="eggNOG" id="KOG0806">
    <property type="taxonomic scope" value="Eukaryota"/>
</dbReference>
<dbReference type="GeneTree" id="ENSGT00550000074838"/>
<dbReference type="HOGENOM" id="CLU_030130_1_0_1"/>
<dbReference type="InParanoid" id="Q9NQR4"/>
<dbReference type="OMA" id="MQSKPYA"/>
<dbReference type="OrthoDB" id="10250282at2759"/>
<dbReference type="PAN-GO" id="Q9NQR4">
    <property type="GO annotations" value="4 GO annotations based on evolutionary models"/>
</dbReference>
<dbReference type="PhylomeDB" id="Q9NQR4"/>
<dbReference type="TreeFam" id="TF300747"/>
<dbReference type="BRENDA" id="3.5.1.3">
    <property type="organism ID" value="2681"/>
</dbReference>
<dbReference type="PathwayCommons" id="Q9NQR4"/>
<dbReference type="Reactome" id="R-HSA-6798695">
    <property type="pathway name" value="Neutrophil degranulation"/>
</dbReference>
<dbReference type="SignaLink" id="Q9NQR4"/>
<dbReference type="BioGRID-ORCS" id="56954">
    <property type="hits" value="57 hits in 1160 CRISPR screens"/>
</dbReference>
<dbReference type="ChiTaRS" id="NIT2">
    <property type="organism name" value="human"/>
</dbReference>
<dbReference type="GenomeRNAi" id="56954"/>
<dbReference type="Pharos" id="Q9NQR4">
    <property type="development level" value="Tbio"/>
</dbReference>
<dbReference type="PRO" id="PR:Q9NQR4"/>
<dbReference type="Proteomes" id="UP000005640">
    <property type="component" value="Chromosome 3"/>
</dbReference>
<dbReference type="RNAct" id="Q9NQR4">
    <property type="molecule type" value="protein"/>
</dbReference>
<dbReference type="Bgee" id="ENSG00000114021">
    <property type="expression patterns" value="Expressed in right lobe of liver and 202 other cell types or tissues"/>
</dbReference>
<dbReference type="ExpressionAtlas" id="Q9NQR4">
    <property type="expression patterns" value="baseline and differential"/>
</dbReference>
<dbReference type="GO" id="GO:0005813">
    <property type="term" value="C:centrosome"/>
    <property type="evidence" value="ECO:0000314"/>
    <property type="project" value="HPA"/>
</dbReference>
<dbReference type="GO" id="GO:0005829">
    <property type="term" value="C:cytosol"/>
    <property type="evidence" value="ECO:0000314"/>
    <property type="project" value="HPA"/>
</dbReference>
<dbReference type="GO" id="GO:0070062">
    <property type="term" value="C:extracellular exosome"/>
    <property type="evidence" value="ECO:0007005"/>
    <property type="project" value="UniProtKB"/>
</dbReference>
<dbReference type="GO" id="GO:0005576">
    <property type="term" value="C:extracellular region"/>
    <property type="evidence" value="ECO:0000304"/>
    <property type="project" value="Reactome"/>
</dbReference>
<dbReference type="GO" id="GO:0005739">
    <property type="term" value="C:mitochondrion"/>
    <property type="evidence" value="ECO:0006056"/>
    <property type="project" value="FlyBase"/>
</dbReference>
<dbReference type="GO" id="GO:0035580">
    <property type="term" value="C:specific granule lumen"/>
    <property type="evidence" value="ECO:0000304"/>
    <property type="project" value="Reactome"/>
</dbReference>
<dbReference type="GO" id="GO:1904724">
    <property type="term" value="C:tertiary granule lumen"/>
    <property type="evidence" value="ECO:0000304"/>
    <property type="project" value="Reactome"/>
</dbReference>
<dbReference type="GO" id="GO:0106008">
    <property type="term" value="F:2-oxoglutaramate amidase activity"/>
    <property type="evidence" value="ECO:0007669"/>
    <property type="project" value="RHEA"/>
</dbReference>
<dbReference type="GO" id="GO:0050152">
    <property type="term" value="F:omega-amidase activity"/>
    <property type="evidence" value="ECO:0000314"/>
    <property type="project" value="BHF-UCL"/>
</dbReference>
<dbReference type="GO" id="GO:0006528">
    <property type="term" value="P:asparagine metabolic process"/>
    <property type="evidence" value="ECO:0000314"/>
    <property type="project" value="BHF-UCL"/>
</dbReference>
<dbReference type="GO" id="GO:0006541">
    <property type="term" value="P:glutamine metabolic process"/>
    <property type="evidence" value="ECO:0000314"/>
    <property type="project" value="BHF-UCL"/>
</dbReference>
<dbReference type="GO" id="GO:0006107">
    <property type="term" value="P:oxaloacetate metabolic process"/>
    <property type="evidence" value="ECO:0000314"/>
    <property type="project" value="BHF-UCL"/>
</dbReference>
<dbReference type="CDD" id="cd07572">
    <property type="entry name" value="nit"/>
    <property type="match status" value="1"/>
</dbReference>
<dbReference type="FunFam" id="3.60.110.10:FF:000002">
    <property type="entry name" value="Nitrilase family member 2"/>
    <property type="match status" value="1"/>
</dbReference>
<dbReference type="Gene3D" id="3.60.110.10">
    <property type="entry name" value="Carbon-nitrogen hydrolase"/>
    <property type="match status" value="1"/>
</dbReference>
<dbReference type="InterPro" id="IPR003010">
    <property type="entry name" value="C-N_Hydrolase"/>
</dbReference>
<dbReference type="InterPro" id="IPR036526">
    <property type="entry name" value="C-N_Hydrolase_sf"/>
</dbReference>
<dbReference type="InterPro" id="IPR045254">
    <property type="entry name" value="Nit1/2_C-N_Hydrolase"/>
</dbReference>
<dbReference type="PANTHER" id="PTHR23088">
    <property type="entry name" value="NITRILASE-RELATED"/>
    <property type="match status" value="1"/>
</dbReference>
<dbReference type="PANTHER" id="PTHR23088:SF30">
    <property type="entry name" value="OMEGA-AMIDASE NIT2"/>
    <property type="match status" value="1"/>
</dbReference>
<dbReference type="Pfam" id="PF00795">
    <property type="entry name" value="CN_hydrolase"/>
    <property type="match status" value="1"/>
</dbReference>
<dbReference type="SUPFAM" id="SSF56317">
    <property type="entry name" value="Carbon-nitrogen hydrolase"/>
    <property type="match status" value="1"/>
</dbReference>
<dbReference type="PROSITE" id="PS50263">
    <property type="entry name" value="CN_HYDROLASE"/>
    <property type="match status" value="1"/>
</dbReference>
<evidence type="ECO:0000250" key="1">
    <source>
        <dbReference type="UniProtKB" id="Q9JHW2"/>
    </source>
</evidence>
<evidence type="ECO:0000255" key="2">
    <source>
        <dbReference type="PROSITE-ProRule" id="PRU00054"/>
    </source>
</evidence>
<evidence type="ECO:0000269" key="3">
    <source>
    </source>
</evidence>
<evidence type="ECO:0000269" key="4">
    <source>
    </source>
</evidence>
<evidence type="ECO:0000269" key="5">
    <source>
    </source>
</evidence>
<evidence type="ECO:0000269" key="6">
    <source>
    </source>
</evidence>
<evidence type="ECO:0000269" key="7">
    <source>
    </source>
</evidence>
<evidence type="ECO:0000303" key="8">
    <source>
    </source>
</evidence>
<evidence type="ECO:0000303" key="9">
    <source>
    </source>
</evidence>
<evidence type="ECO:0000305" key="10"/>
<evidence type="ECO:0000305" key="11">
    <source>
    </source>
</evidence>
<evidence type="ECO:0007744" key="12">
    <source>
    </source>
</evidence>
<comment type="function">
    <text evidence="6 7">Has omega-amidase activity (PubMed:19595734, PubMed:22674578). The role of omega-amidase is to remove potentially toxic intermediates by converting 2-oxoglutaramate and 2-oxosuccinamate to biologically useful 2-oxoglutarate and oxaloacetate, respectively (PubMed:19595734).</text>
</comment>
<comment type="catalytic activity">
    <reaction evidence="6 7">
        <text>a monoamide of a dicarboxylate + H2O = a dicarboxylate + NH4(+)</text>
        <dbReference type="Rhea" id="RHEA:11716"/>
        <dbReference type="ChEBI" id="CHEBI:15377"/>
        <dbReference type="ChEBI" id="CHEBI:28938"/>
        <dbReference type="ChEBI" id="CHEBI:28965"/>
        <dbReference type="ChEBI" id="CHEBI:77450"/>
        <dbReference type="EC" id="3.5.1.3"/>
    </reaction>
    <physiologicalReaction direction="left-to-right" evidence="6 7">
        <dbReference type="Rhea" id="RHEA:11717"/>
    </physiologicalReaction>
</comment>
<comment type="catalytic activity">
    <reaction evidence="6 7">
        <text>2-oxoglutaramate + H2O = 2-oxoglutarate + NH4(+)</text>
        <dbReference type="Rhea" id="RHEA:32963"/>
        <dbReference type="ChEBI" id="CHEBI:15377"/>
        <dbReference type="ChEBI" id="CHEBI:16769"/>
        <dbReference type="ChEBI" id="CHEBI:16810"/>
        <dbReference type="ChEBI" id="CHEBI:28938"/>
        <dbReference type="EC" id="3.5.1.3"/>
    </reaction>
    <physiologicalReaction direction="left-to-right" evidence="6 7">
        <dbReference type="Rhea" id="RHEA:32964"/>
    </physiologicalReaction>
</comment>
<comment type="catalytic activity">
    <reaction evidence="7">
        <text>2-oxosuccinamate + H2O = oxaloacetate + NH4(+)</text>
        <dbReference type="Rhea" id="RHEA:59412"/>
        <dbReference type="ChEBI" id="CHEBI:15377"/>
        <dbReference type="ChEBI" id="CHEBI:16452"/>
        <dbReference type="ChEBI" id="CHEBI:28938"/>
        <dbReference type="ChEBI" id="CHEBI:57735"/>
        <dbReference type="EC" id="3.5.1.3"/>
    </reaction>
    <physiologicalReaction direction="left-to-right" evidence="7">
        <dbReference type="Rhea" id="RHEA:59413"/>
    </physiologicalReaction>
</comment>
<comment type="biophysicochemical properties">
    <kinetics>
        <KM evidence="6">0.009 mM for 2-oxoglutaramate (open-chain form at pH 8.5 and 37 degrees Celsius)</KM>
        <KM evidence="7">0.003 mM for 2-oxoglutaramate (open-chain form at pH 8.5 and 37 degrees Celsius)</KM>
        <KM evidence="7">10.9 mM for succinamate (at pH 7.2 and 37 degrees Celsius)</KM>
        <Vmax evidence="6">5.9 umol/min/mg enzyme with 2-oxoglutaramate as substrate (open-chain form at pH 8.5 and 37 degrees Celsius)</Vmax>
        <Vmax evidence="7">30.3 umol/min/mg enzyme with 2-oxoglutaramate as substrate (open-chain form at pH 8.5 and 37 degrees Celsius)</Vmax>
        <Vmax evidence="7">169.0 umol/min/mg enzyme with succinamate as substrate (at pH 7.2 and 37 degrees Celsius)</Vmax>
        <text evidence="8 9">In solution, 2-oxoglutaramate is in equilibrium with a cyclic form (2-hydroxy-5-oxoproline), and at pH 8.0 or above, the rate of ring opening is no longer limiting for the omega-amidase reaction (PubMed:19595734, PubMed:22674578). The kinetic constants are determined for the recombinant His6-tagged protein (PubMed:22674578).</text>
    </kinetics>
</comment>
<comment type="subunit">
    <text evidence="6">Homodimer.</text>
</comment>
<comment type="subcellular location">
    <subcellularLocation>
        <location evidence="5">Cytoplasm</location>
    </subcellularLocation>
</comment>
<comment type="tissue specificity">
    <text evidence="3 5">Detected in fetal brain (at protein level). Ubiquitous. Detected in heart, brain, placenta, lung, liver, skeletal muscle, kidney, pancreas, prostate, spleen, thymus, prostate, testis, ovary, small intestine and colon.</text>
</comment>
<comment type="mass spectrometry" mass="30585.0" method="MALDI" evidence="5"/>
<comment type="similarity">
    <text evidence="10">Belongs to the carbon-nitrogen hydrolase superfamily. NIT1/NIT2 family.</text>
</comment>
<gene>
    <name type="primary">NIT2</name>
    <name type="ORF">CUA002</name>
</gene>
<organism>
    <name type="scientific">Homo sapiens</name>
    <name type="common">Human</name>
    <dbReference type="NCBI Taxonomy" id="9606"/>
    <lineage>
        <taxon>Eukaryota</taxon>
        <taxon>Metazoa</taxon>
        <taxon>Chordata</taxon>
        <taxon>Craniata</taxon>
        <taxon>Vertebrata</taxon>
        <taxon>Euteleostomi</taxon>
        <taxon>Mammalia</taxon>
        <taxon>Eutheria</taxon>
        <taxon>Euarchontoglires</taxon>
        <taxon>Primates</taxon>
        <taxon>Haplorrhini</taxon>
        <taxon>Catarrhini</taxon>
        <taxon>Hominidae</taxon>
        <taxon>Homo</taxon>
    </lineage>
</organism>
<reference key="1">
    <citation type="journal article" date="2000" name="Curr. Biol.">
        <title>Crystal structure of the worm NitFhit Rosetta stone protein reveals a Nit tetramer binding two Fhit dimers.</title>
        <authorList>
            <person name="Pace H.C."/>
            <person name="Hodawadekar S.C."/>
            <person name="Draganescu A."/>
            <person name="Huang J."/>
            <person name="Bieganowski P."/>
            <person name="Pekarsky Y."/>
            <person name="Croce C.M."/>
            <person name="Brenner C."/>
        </authorList>
    </citation>
    <scope>NUCLEOTIDE SEQUENCE [MRNA]</scope>
</reference>
<reference key="2">
    <citation type="submission" date="2000-05" db="EMBL/GenBank/DDBJ databases">
        <authorList>
            <person name="Xu X."/>
            <person name="Yang Y."/>
            <person name="Gao G."/>
            <person name="Xiao H."/>
            <person name="Chen Z."/>
            <person name="Han Z."/>
        </authorList>
    </citation>
    <scope>NUCLEOTIDE SEQUENCE [LARGE SCALE MRNA]</scope>
    <source>
        <tissue>Adrenal tumor</tissue>
    </source>
</reference>
<reference key="3">
    <citation type="journal article" date="2004" name="Nat. Genet.">
        <title>Complete sequencing and characterization of 21,243 full-length human cDNAs.</title>
        <authorList>
            <person name="Ota T."/>
            <person name="Suzuki Y."/>
            <person name="Nishikawa T."/>
            <person name="Otsuki T."/>
            <person name="Sugiyama T."/>
            <person name="Irie R."/>
            <person name="Wakamatsu A."/>
            <person name="Hayashi K."/>
            <person name="Sato H."/>
            <person name="Nagai K."/>
            <person name="Kimura K."/>
            <person name="Makita H."/>
            <person name="Sekine M."/>
            <person name="Obayashi M."/>
            <person name="Nishi T."/>
            <person name="Shibahara T."/>
            <person name="Tanaka T."/>
            <person name="Ishii S."/>
            <person name="Yamamoto J."/>
            <person name="Saito K."/>
            <person name="Kawai Y."/>
            <person name="Isono Y."/>
            <person name="Nakamura Y."/>
            <person name="Nagahari K."/>
            <person name="Murakami K."/>
            <person name="Yasuda T."/>
            <person name="Iwayanagi T."/>
            <person name="Wagatsuma M."/>
            <person name="Shiratori A."/>
            <person name="Sudo H."/>
            <person name="Hosoiri T."/>
            <person name="Kaku Y."/>
            <person name="Kodaira H."/>
            <person name="Kondo H."/>
            <person name="Sugawara M."/>
            <person name="Takahashi M."/>
            <person name="Kanda K."/>
            <person name="Yokoi T."/>
            <person name="Furuya T."/>
            <person name="Kikkawa E."/>
            <person name="Omura Y."/>
            <person name="Abe K."/>
            <person name="Kamihara K."/>
            <person name="Katsuta N."/>
            <person name="Sato K."/>
            <person name="Tanikawa M."/>
            <person name="Yamazaki M."/>
            <person name="Ninomiya K."/>
            <person name="Ishibashi T."/>
            <person name="Yamashita H."/>
            <person name="Murakawa K."/>
            <person name="Fujimori K."/>
            <person name="Tanai H."/>
            <person name="Kimata M."/>
            <person name="Watanabe M."/>
            <person name="Hiraoka S."/>
            <person name="Chiba Y."/>
            <person name="Ishida S."/>
            <person name="Ono Y."/>
            <person name="Takiguchi S."/>
            <person name="Watanabe S."/>
            <person name="Yosida M."/>
            <person name="Hotuta T."/>
            <person name="Kusano J."/>
            <person name="Kanehori K."/>
            <person name="Takahashi-Fujii A."/>
            <person name="Hara H."/>
            <person name="Tanase T.-O."/>
            <person name="Nomura Y."/>
            <person name="Togiya S."/>
            <person name="Komai F."/>
            <person name="Hara R."/>
            <person name="Takeuchi K."/>
            <person name="Arita M."/>
            <person name="Imose N."/>
            <person name="Musashino K."/>
            <person name="Yuuki H."/>
            <person name="Oshima A."/>
            <person name="Sasaki N."/>
            <person name="Aotsuka S."/>
            <person name="Yoshikawa Y."/>
            <person name="Matsunawa H."/>
            <person name="Ichihara T."/>
            <person name="Shiohata N."/>
            <person name="Sano S."/>
            <person name="Moriya S."/>
            <person name="Momiyama H."/>
            <person name="Satoh N."/>
            <person name="Takami S."/>
            <person name="Terashima Y."/>
            <person name="Suzuki O."/>
            <person name="Nakagawa S."/>
            <person name="Senoh A."/>
            <person name="Mizoguchi H."/>
            <person name="Goto Y."/>
            <person name="Shimizu F."/>
            <person name="Wakebe H."/>
            <person name="Hishigaki H."/>
            <person name="Watanabe T."/>
            <person name="Sugiyama A."/>
            <person name="Takemoto M."/>
            <person name="Kawakami B."/>
            <person name="Yamazaki M."/>
            <person name="Watanabe K."/>
            <person name="Kumagai A."/>
            <person name="Itakura S."/>
            <person name="Fukuzumi Y."/>
            <person name="Fujimori Y."/>
            <person name="Komiyama M."/>
            <person name="Tashiro H."/>
            <person name="Tanigami A."/>
            <person name="Fujiwara T."/>
            <person name="Ono T."/>
            <person name="Yamada K."/>
            <person name="Fujii Y."/>
            <person name="Ozaki K."/>
            <person name="Hirao M."/>
            <person name="Ohmori Y."/>
            <person name="Kawabata A."/>
            <person name="Hikiji T."/>
            <person name="Kobatake N."/>
            <person name="Inagaki H."/>
            <person name="Ikema Y."/>
            <person name="Okamoto S."/>
            <person name="Okitani R."/>
            <person name="Kawakami T."/>
            <person name="Noguchi S."/>
            <person name="Itoh T."/>
            <person name="Shigeta K."/>
            <person name="Senba T."/>
            <person name="Matsumura K."/>
            <person name="Nakajima Y."/>
            <person name="Mizuno T."/>
            <person name="Morinaga M."/>
            <person name="Sasaki M."/>
            <person name="Togashi T."/>
            <person name="Oyama M."/>
            <person name="Hata H."/>
            <person name="Watanabe M."/>
            <person name="Komatsu T."/>
            <person name="Mizushima-Sugano J."/>
            <person name="Satoh T."/>
            <person name="Shirai Y."/>
            <person name="Takahashi Y."/>
            <person name="Nakagawa K."/>
            <person name="Okumura K."/>
            <person name="Nagase T."/>
            <person name="Nomura N."/>
            <person name="Kikuchi H."/>
            <person name="Masuho Y."/>
            <person name="Yamashita R."/>
            <person name="Nakai K."/>
            <person name="Yada T."/>
            <person name="Nakamura Y."/>
            <person name="Ohara O."/>
            <person name="Isogai T."/>
            <person name="Sugano S."/>
        </authorList>
    </citation>
    <scope>NUCLEOTIDE SEQUENCE [LARGE SCALE MRNA]</scope>
</reference>
<reference key="4">
    <citation type="submission" date="2005-09" db="EMBL/GenBank/DDBJ databases">
        <authorList>
            <person name="Mural R.J."/>
            <person name="Istrail S."/>
            <person name="Sutton G.G."/>
            <person name="Florea L."/>
            <person name="Halpern A.L."/>
            <person name="Mobarry C.M."/>
            <person name="Lippert R."/>
            <person name="Walenz B."/>
            <person name="Shatkay H."/>
            <person name="Dew I."/>
            <person name="Miller J.R."/>
            <person name="Flanigan M.J."/>
            <person name="Edwards N.J."/>
            <person name="Bolanos R."/>
            <person name="Fasulo D."/>
            <person name="Halldorsson B.V."/>
            <person name="Hannenhalli S."/>
            <person name="Turner R."/>
            <person name="Yooseph S."/>
            <person name="Lu F."/>
            <person name="Nusskern D.R."/>
            <person name="Shue B.C."/>
            <person name="Zheng X.H."/>
            <person name="Zhong F."/>
            <person name="Delcher A.L."/>
            <person name="Huson D.H."/>
            <person name="Kravitz S.A."/>
            <person name="Mouchard L."/>
            <person name="Reinert K."/>
            <person name="Remington K.A."/>
            <person name="Clark A.G."/>
            <person name="Waterman M.S."/>
            <person name="Eichler E.E."/>
            <person name="Adams M.D."/>
            <person name="Hunkapiller M.W."/>
            <person name="Myers E.W."/>
            <person name="Venter J.C."/>
        </authorList>
    </citation>
    <scope>NUCLEOTIDE SEQUENCE [LARGE SCALE GENOMIC DNA]</scope>
</reference>
<reference key="5">
    <citation type="journal article" date="2004" name="Genome Res.">
        <title>The status, quality, and expansion of the NIH full-length cDNA project: the Mammalian Gene Collection (MGC).</title>
        <authorList>
            <consortium name="The MGC Project Team"/>
        </authorList>
    </citation>
    <scope>NUCLEOTIDE SEQUENCE [LARGE SCALE MRNA]</scope>
    <scope>VARIANT ALA-231</scope>
    <source>
        <tissue>Testis</tissue>
    </source>
</reference>
<reference key="6">
    <citation type="journal article" date="2003" name="Cell. Mol. Biol.">
        <title>Deranged hypothetical proteins Rik protein, Nit protein 2 and mitochondrial inner membrane protein, Mitofilin, in fetal Down syndrome brain.</title>
        <authorList>
            <person name="Myung J.K."/>
            <person name="Gulesserian T."/>
            <person name="Fountoulakis M."/>
            <person name="Lubec G."/>
        </authorList>
    </citation>
    <scope>TISSUE SPECIFICITY</scope>
    <scope>IDENTIFICATION BY MASS SPECTROMETRY</scope>
</reference>
<reference key="7">
    <citation type="journal article" date="2005" name="Nat. Biotechnol.">
        <title>Immunoaffinity profiling of tyrosine phosphorylation in cancer cells.</title>
        <authorList>
            <person name="Rush J."/>
            <person name="Moritz A."/>
            <person name="Lee K.A."/>
            <person name="Guo A."/>
            <person name="Goss V.L."/>
            <person name="Spek E.J."/>
            <person name="Zhang H."/>
            <person name="Zha X.-M."/>
            <person name="Polakiewicz R.D."/>
            <person name="Comb M.J."/>
        </authorList>
    </citation>
    <scope>IDENTIFICATION BY MASS SPECTROMETRY [LARGE SCALE ANALYSIS]</scope>
</reference>
<reference key="8">
    <citation type="journal article" date="2007" name="FEBS J.">
        <title>Growth inhibitory effect of the human NIT2 gene and its allelic imbalance in cancers.</title>
        <authorList>
            <person name="Lin C.-H."/>
            <person name="Chung M.-Y."/>
            <person name="Chen W.-B."/>
            <person name="Chien C.-H."/>
        </authorList>
    </citation>
    <scope>TISSUE SPECIFICITY</scope>
    <scope>SUBCELLULAR LOCATION</scope>
    <scope>MASS SPECTROMETRY</scope>
</reference>
<reference key="9">
    <citation type="journal article" date="2009" name="Biochimie">
        <title>Identification of the putative tumor suppressor Nit2 as omega-amidase, an enzyme metabolically linked to glutamine and asparagine transamination.</title>
        <authorList>
            <person name="Krasnikov B.F."/>
            <person name="Chien C.-H."/>
            <person name="Nostramo R."/>
            <person name="Pinto J.T."/>
            <person name="Nieves E."/>
            <person name="Callaway M."/>
            <person name="Sun J."/>
            <person name="Huebner K."/>
            <person name="Cooper A.J.L."/>
        </authorList>
    </citation>
    <scope>FUNCTION</scope>
    <scope>SUBUNIT</scope>
    <scope>BIOPHYSICOCHEMICAL PROPERTIES</scope>
    <scope>CATALYTIC ACTIVITY</scope>
</reference>
<reference key="10">
    <citation type="journal article" date="2011" name="BMC Syst. Biol.">
        <title>Initial characterization of the human central proteome.</title>
        <authorList>
            <person name="Burkard T.R."/>
            <person name="Planyavsky M."/>
            <person name="Kaupe I."/>
            <person name="Breitwieser F.P."/>
            <person name="Buerckstuemmer T."/>
            <person name="Bennett K.L."/>
            <person name="Superti-Furga G."/>
            <person name="Colinge J."/>
        </authorList>
    </citation>
    <scope>IDENTIFICATION BY MASS SPECTROMETRY [LARGE SCALE ANALYSIS]</scope>
</reference>
<reference key="11">
    <citation type="journal article" date="2012" name="J. Biol. Chem.">
        <title>Structural insights into the catalytic active site and activity of human Nit2/omega-amidase: kinetic assay and molecular dynamics simulation.</title>
        <authorList>
            <person name="Chien C.H."/>
            <person name="Gao Q.Z."/>
            <person name="Cooper A.J."/>
            <person name="Lyu J.H."/>
            <person name="Sheu S.Y."/>
        </authorList>
    </citation>
    <scope>FUNCTION</scope>
    <scope>CATALYTIC ACTIVITY</scope>
    <scope>BIOPHYSICOCHEMICAL PROPERTIES</scope>
    <scope>IDENTIFICATION BY MASS SPECTROMETRY</scope>
    <scope>ACTIVE SITE</scope>
    <scope>MUTAGENESIS OF GLU-43; LYS-112; CYS-153 AND 116-PHE--GLU-128</scope>
</reference>
<reference key="12">
    <citation type="journal article" date="2014" name="J. Proteomics">
        <title>An enzyme assisted RP-RPLC approach for in-depth analysis of human liver phosphoproteome.</title>
        <authorList>
            <person name="Bian Y."/>
            <person name="Song C."/>
            <person name="Cheng K."/>
            <person name="Dong M."/>
            <person name="Wang F."/>
            <person name="Huang J."/>
            <person name="Sun D."/>
            <person name="Wang L."/>
            <person name="Ye M."/>
            <person name="Zou H."/>
        </authorList>
    </citation>
    <scope>PHOSPHORYLATION [LARGE SCALE ANALYSIS] AT SER-26</scope>
    <scope>IDENTIFICATION BY MASS SPECTROMETRY [LARGE SCALE ANALYSIS]</scope>
    <source>
        <tissue>Liver</tissue>
    </source>
</reference>
<reference key="13">
    <citation type="journal article" date="2015" name="Proteomics">
        <title>N-terminome analysis of the human mitochondrial proteome.</title>
        <authorList>
            <person name="Vaca Jacome A.S."/>
            <person name="Rabilloud T."/>
            <person name="Schaeffer-Reiss C."/>
            <person name="Rompais M."/>
            <person name="Ayoub D."/>
            <person name="Lane L."/>
            <person name="Bairoch A."/>
            <person name="Van Dorsselaer A."/>
            <person name="Carapito C."/>
        </authorList>
    </citation>
    <scope>IDENTIFICATION BY MASS SPECTROMETRY [LARGE SCALE ANALYSIS]</scope>
</reference>
<accession>Q9NQR4</accession>
<accession>B2R9A3</accession>
<accession>D3DN47</accession>
<accession>Q8WUF0</accession>
<proteinExistence type="evidence at protein level"/>
<keyword id="KW-0007">Acetylation</keyword>
<keyword id="KW-0963">Cytoplasm</keyword>
<keyword id="KW-0378">Hydrolase</keyword>
<keyword id="KW-0597">Phosphoprotein</keyword>
<keyword id="KW-1267">Proteomics identification</keyword>
<keyword id="KW-1185">Reference proteome</keyword>
<name>NIT2_HUMAN</name>